<accession>Q87DT9</accession>
<sequence>MGIRIQELRKQFEDFTALAGIDLDIRQGELLALLGPSGSGKTTLLRIIAGLEHADAGRVLFGDEDATTMSVQARRVGFVFQHYALFKHMSVYENVAFGLRVRRGKARWPESQISARVFELLSLVQLDGLEQRYPMQLSGGQRQRVALARALAIEPRVLLLDEPFGALDAQVRRDLRRWLREIHDRTGLTTVFVTHDQEEALELADRVAILNQGGIEQVASPDEVYNRPSSPFVYSFVGAVNRLPGCVGADGLEVAGIVLSCPPQLSGWGAVDLYVRPEDLVLDAQEGWSAIVLWSQRSGPRMRVRARLEHSAHEVEIELSSATDEYVEGQKLRLIPRHYGVFFSESGS</sequence>
<gene>
    <name evidence="1" type="primary">cysA</name>
    <name type="ordered locus">PD_0591</name>
</gene>
<dbReference type="EC" id="7.3.2.3" evidence="1"/>
<dbReference type="EMBL" id="AE009442">
    <property type="protein sequence ID" value="AAO28464.1"/>
    <property type="molecule type" value="Genomic_DNA"/>
</dbReference>
<dbReference type="RefSeq" id="WP_011097711.1">
    <property type="nucleotide sequence ID" value="NC_004556.1"/>
</dbReference>
<dbReference type="SMR" id="Q87DT9"/>
<dbReference type="KEGG" id="xft:PD_0591"/>
<dbReference type="HOGENOM" id="CLU_000604_1_1_6"/>
<dbReference type="Proteomes" id="UP000002516">
    <property type="component" value="Chromosome"/>
</dbReference>
<dbReference type="GO" id="GO:0043190">
    <property type="term" value="C:ATP-binding cassette (ABC) transporter complex"/>
    <property type="evidence" value="ECO:0007669"/>
    <property type="project" value="InterPro"/>
</dbReference>
<dbReference type="GO" id="GO:0015419">
    <property type="term" value="F:ABC-type sulfate transporter activity"/>
    <property type="evidence" value="ECO:0007669"/>
    <property type="project" value="InterPro"/>
</dbReference>
<dbReference type="GO" id="GO:0102025">
    <property type="term" value="F:ABC-type thiosulfate transporter activity"/>
    <property type="evidence" value="ECO:0007669"/>
    <property type="project" value="RHEA"/>
</dbReference>
<dbReference type="GO" id="GO:0005524">
    <property type="term" value="F:ATP binding"/>
    <property type="evidence" value="ECO:0007669"/>
    <property type="project" value="UniProtKB-KW"/>
</dbReference>
<dbReference type="GO" id="GO:0016887">
    <property type="term" value="F:ATP hydrolysis activity"/>
    <property type="evidence" value="ECO:0007669"/>
    <property type="project" value="InterPro"/>
</dbReference>
<dbReference type="CDD" id="cd03296">
    <property type="entry name" value="ABC_CysA_sulfate_importer"/>
    <property type="match status" value="1"/>
</dbReference>
<dbReference type="FunFam" id="3.40.50.300:FF:000425">
    <property type="entry name" value="Probable ABC transporter, ATP-binding subunit"/>
    <property type="match status" value="1"/>
</dbReference>
<dbReference type="Gene3D" id="3.40.50.300">
    <property type="entry name" value="P-loop containing nucleotide triphosphate hydrolases"/>
    <property type="match status" value="1"/>
</dbReference>
<dbReference type="InterPro" id="IPR003593">
    <property type="entry name" value="AAA+_ATPase"/>
</dbReference>
<dbReference type="InterPro" id="IPR050093">
    <property type="entry name" value="ABC_SmlMolc_Importer"/>
</dbReference>
<dbReference type="InterPro" id="IPR003439">
    <property type="entry name" value="ABC_transporter-like_ATP-bd"/>
</dbReference>
<dbReference type="InterPro" id="IPR017871">
    <property type="entry name" value="ABC_transporter-like_CS"/>
</dbReference>
<dbReference type="InterPro" id="IPR008995">
    <property type="entry name" value="Mo/tungstate-bd_C_term_dom"/>
</dbReference>
<dbReference type="InterPro" id="IPR027417">
    <property type="entry name" value="P-loop_NTPase"/>
</dbReference>
<dbReference type="InterPro" id="IPR005666">
    <property type="entry name" value="Sulph_transpt1"/>
</dbReference>
<dbReference type="NCBIfam" id="TIGR00968">
    <property type="entry name" value="3a0106s01"/>
    <property type="match status" value="1"/>
</dbReference>
<dbReference type="PANTHER" id="PTHR42781">
    <property type="entry name" value="SPERMIDINE/PUTRESCINE IMPORT ATP-BINDING PROTEIN POTA"/>
    <property type="match status" value="1"/>
</dbReference>
<dbReference type="PANTHER" id="PTHR42781:SF4">
    <property type="entry name" value="SPERMIDINE_PUTRESCINE IMPORT ATP-BINDING PROTEIN POTA"/>
    <property type="match status" value="1"/>
</dbReference>
<dbReference type="Pfam" id="PF00005">
    <property type="entry name" value="ABC_tran"/>
    <property type="match status" value="1"/>
</dbReference>
<dbReference type="SMART" id="SM00382">
    <property type="entry name" value="AAA"/>
    <property type="match status" value="1"/>
</dbReference>
<dbReference type="SUPFAM" id="SSF50331">
    <property type="entry name" value="MOP-like"/>
    <property type="match status" value="1"/>
</dbReference>
<dbReference type="SUPFAM" id="SSF52540">
    <property type="entry name" value="P-loop containing nucleoside triphosphate hydrolases"/>
    <property type="match status" value="1"/>
</dbReference>
<dbReference type="PROSITE" id="PS00211">
    <property type="entry name" value="ABC_TRANSPORTER_1"/>
    <property type="match status" value="1"/>
</dbReference>
<dbReference type="PROSITE" id="PS50893">
    <property type="entry name" value="ABC_TRANSPORTER_2"/>
    <property type="match status" value="1"/>
</dbReference>
<dbReference type="PROSITE" id="PS51237">
    <property type="entry name" value="CYSA"/>
    <property type="match status" value="1"/>
</dbReference>
<feature type="chain" id="PRO_0000092303" description="Sulfate/thiosulfate import ATP-binding protein CysA">
    <location>
        <begin position="1"/>
        <end position="348"/>
    </location>
</feature>
<feature type="domain" description="ABC transporter" evidence="1">
    <location>
        <begin position="3"/>
        <end position="237"/>
    </location>
</feature>
<feature type="binding site" evidence="1">
    <location>
        <begin position="35"/>
        <end position="42"/>
    </location>
    <ligand>
        <name>ATP</name>
        <dbReference type="ChEBI" id="CHEBI:30616"/>
    </ligand>
</feature>
<name>CYSA_XYLFT</name>
<comment type="function">
    <text evidence="1">Part of the ABC transporter complex CysAWTP involved in sulfate/thiosulfate import. Responsible for energy coupling to the transport system.</text>
</comment>
<comment type="catalytic activity">
    <reaction evidence="1">
        <text>sulfate(out) + ATP + H2O = sulfate(in) + ADP + phosphate + H(+)</text>
        <dbReference type="Rhea" id="RHEA:10192"/>
        <dbReference type="ChEBI" id="CHEBI:15377"/>
        <dbReference type="ChEBI" id="CHEBI:15378"/>
        <dbReference type="ChEBI" id="CHEBI:16189"/>
        <dbReference type="ChEBI" id="CHEBI:30616"/>
        <dbReference type="ChEBI" id="CHEBI:43474"/>
        <dbReference type="ChEBI" id="CHEBI:456216"/>
        <dbReference type="EC" id="7.3.2.3"/>
    </reaction>
</comment>
<comment type="catalytic activity">
    <reaction evidence="1">
        <text>thiosulfate(out) + ATP + H2O = thiosulfate(in) + ADP + phosphate + H(+)</text>
        <dbReference type="Rhea" id="RHEA:29871"/>
        <dbReference type="ChEBI" id="CHEBI:15377"/>
        <dbReference type="ChEBI" id="CHEBI:15378"/>
        <dbReference type="ChEBI" id="CHEBI:30616"/>
        <dbReference type="ChEBI" id="CHEBI:33542"/>
        <dbReference type="ChEBI" id="CHEBI:43474"/>
        <dbReference type="ChEBI" id="CHEBI:456216"/>
        <dbReference type="EC" id="7.3.2.3"/>
    </reaction>
</comment>
<comment type="subunit">
    <text evidence="1">The complex is composed of two ATP-binding proteins (CysA), two transmembrane proteins (CysT and CysW) and a solute-binding protein (CysP).</text>
</comment>
<comment type="subcellular location">
    <subcellularLocation>
        <location evidence="1">Cell inner membrane</location>
        <topology evidence="1">Peripheral membrane protein</topology>
    </subcellularLocation>
</comment>
<comment type="similarity">
    <text evidence="1">Belongs to the ABC transporter superfamily. Sulfate/tungstate importer (TC 3.A.1.6) family.</text>
</comment>
<reference key="1">
    <citation type="journal article" date="2003" name="J. Bacteriol.">
        <title>Comparative analyses of the complete genome sequences of Pierce's disease and citrus variegated chlorosis strains of Xylella fastidiosa.</title>
        <authorList>
            <person name="Van Sluys M.A."/>
            <person name="de Oliveira M.C."/>
            <person name="Monteiro-Vitorello C.B."/>
            <person name="Miyaki C.Y."/>
            <person name="Furlan L.R."/>
            <person name="Camargo L.E.A."/>
            <person name="da Silva A.C.R."/>
            <person name="Moon D.H."/>
            <person name="Takita M.A."/>
            <person name="Lemos E.G.M."/>
            <person name="Machado M.A."/>
            <person name="Ferro M.I.T."/>
            <person name="da Silva F.R."/>
            <person name="Goldman M.H.S."/>
            <person name="Goldman G.H."/>
            <person name="Lemos M.V.F."/>
            <person name="El-Dorry H."/>
            <person name="Tsai S.M."/>
            <person name="Carrer H."/>
            <person name="Carraro D.M."/>
            <person name="de Oliveira R.C."/>
            <person name="Nunes L.R."/>
            <person name="Siqueira W.J."/>
            <person name="Coutinho L.L."/>
            <person name="Kimura E.T."/>
            <person name="Ferro E.S."/>
            <person name="Harakava R."/>
            <person name="Kuramae E.E."/>
            <person name="Marino C.L."/>
            <person name="Giglioti E."/>
            <person name="Abreu I.L."/>
            <person name="Alves L.M.C."/>
            <person name="do Amaral A.M."/>
            <person name="Baia G.S."/>
            <person name="Blanco S.R."/>
            <person name="Brito M.S."/>
            <person name="Cannavan F.S."/>
            <person name="Celestino A.V."/>
            <person name="da Cunha A.F."/>
            <person name="Fenille R.C."/>
            <person name="Ferro J.A."/>
            <person name="Formighieri E.F."/>
            <person name="Kishi L.T."/>
            <person name="Leoni S.G."/>
            <person name="Oliveira A.R."/>
            <person name="Rosa V.E. Jr."/>
            <person name="Sassaki F.T."/>
            <person name="Sena J.A.D."/>
            <person name="de Souza A.A."/>
            <person name="Truffi D."/>
            <person name="Tsukumo F."/>
            <person name="Yanai G.M."/>
            <person name="Zaros L.G."/>
            <person name="Civerolo E.L."/>
            <person name="Simpson A.J.G."/>
            <person name="Almeida N.F. Jr."/>
            <person name="Setubal J.C."/>
            <person name="Kitajima J.P."/>
        </authorList>
    </citation>
    <scope>NUCLEOTIDE SEQUENCE [LARGE SCALE GENOMIC DNA]</scope>
    <source>
        <strain>Temecula1 / ATCC 700964</strain>
    </source>
</reference>
<protein>
    <recommendedName>
        <fullName evidence="1">Sulfate/thiosulfate import ATP-binding protein CysA</fullName>
        <ecNumber evidence="1">7.3.2.3</ecNumber>
    </recommendedName>
    <alternativeName>
        <fullName evidence="1">Sulfate-transporting ATPase</fullName>
    </alternativeName>
</protein>
<evidence type="ECO:0000255" key="1">
    <source>
        <dbReference type="HAMAP-Rule" id="MF_01701"/>
    </source>
</evidence>
<keyword id="KW-0067">ATP-binding</keyword>
<keyword id="KW-0997">Cell inner membrane</keyword>
<keyword id="KW-1003">Cell membrane</keyword>
<keyword id="KW-0472">Membrane</keyword>
<keyword id="KW-0547">Nucleotide-binding</keyword>
<keyword id="KW-1185">Reference proteome</keyword>
<keyword id="KW-0764">Sulfate transport</keyword>
<keyword id="KW-1278">Translocase</keyword>
<keyword id="KW-0813">Transport</keyword>
<proteinExistence type="inferred from homology"/>
<organism>
    <name type="scientific">Xylella fastidiosa (strain Temecula1 / ATCC 700964)</name>
    <dbReference type="NCBI Taxonomy" id="183190"/>
    <lineage>
        <taxon>Bacteria</taxon>
        <taxon>Pseudomonadati</taxon>
        <taxon>Pseudomonadota</taxon>
        <taxon>Gammaproteobacteria</taxon>
        <taxon>Lysobacterales</taxon>
        <taxon>Lysobacteraceae</taxon>
        <taxon>Xylella</taxon>
    </lineage>
</organism>